<reference key="1">
    <citation type="submission" date="2007-09" db="EMBL/GenBank/DDBJ databases">
        <title>Complete sequence of chromosome of Serratia proteamaculans 568.</title>
        <authorList>
            <consortium name="US DOE Joint Genome Institute"/>
            <person name="Copeland A."/>
            <person name="Lucas S."/>
            <person name="Lapidus A."/>
            <person name="Barry K."/>
            <person name="Glavina del Rio T."/>
            <person name="Dalin E."/>
            <person name="Tice H."/>
            <person name="Pitluck S."/>
            <person name="Chain P."/>
            <person name="Malfatti S."/>
            <person name="Shin M."/>
            <person name="Vergez L."/>
            <person name="Schmutz J."/>
            <person name="Larimer F."/>
            <person name="Land M."/>
            <person name="Hauser L."/>
            <person name="Kyrpides N."/>
            <person name="Kim E."/>
            <person name="Taghavi S."/>
            <person name="Newman L."/>
            <person name="Vangronsveld J."/>
            <person name="van der Lelie D."/>
            <person name="Richardson P."/>
        </authorList>
    </citation>
    <scope>NUCLEOTIDE SEQUENCE [LARGE SCALE GENOMIC DNA]</scope>
    <source>
        <strain>568</strain>
    </source>
</reference>
<name>CH10_SERP5</name>
<comment type="function">
    <text evidence="1">Together with the chaperonin GroEL, plays an essential role in assisting protein folding. The GroEL-GroES system forms a nano-cage that allows encapsulation of the non-native substrate proteins and provides a physical environment optimized to promote and accelerate protein folding. GroES binds to the apical surface of the GroEL ring, thereby capping the opening of the GroEL channel.</text>
</comment>
<comment type="subunit">
    <text evidence="1">Heptamer of 7 subunits arranged in a ring. Interacts with the chaperonin GroEL.</text>
</comment>
<comment type="subcellular location">
    <subcellularLocation>
        <location evidence="1">Cytoplasm</location>
    </subcellularLocation>
</comment>
<comment type="similarity">
    <text evidence="1">Belongs to the GroES chaperonin family.</text>
</comment>
<gene>
    <name evidence="1" type="primary">groES</name>
    <name evidence="1" type="synonym">groS</name>
    <name type="ordered locus">Spro_0408</name>
</gene>
<evidence type="ECO:0000255" key="1">
    <source>
        <dbReference type="HAMAP-Rule" id="MF_00580"/>
    </source>
</evidence>
<feature type="chain" id="PRO_1000061192" description="Co-chaperonin GroES">
    <location>
        <begin position="1"/>
        <end position="97"/>
    </location>
</feature>
<proteinExistence type="inferred from homology"/>
<accession>A8G8S6</accession>
<protein>
    <recommendedName>
        <fullName evidence="1">Co-chaperonin GroES</fullName>
    </recommendedName>
    <alternativeName>
        <fullName evidence="1">10 kDa chaperonin</fullName>
    </alternativeName>
    <alternativeName>
        <fullName evidence="1">Chaperonin-10</fullName>
        <shortName evidence="1">Cpn10</shortName>
    </alternativeName>
</protein>
<keyword id="KW-0143">Chaperone</keyword>
<keyword id="KW-0963">Cytoplasm</keyword>
<sequence>MSIRPLHDRVIVKRKEVESKSAGGIVLTGSAAGKSTRGEVVAVGKGRVLENGNVQPLDVKVGDIVIFNDGYGVKAEKIDNEEVLIMSESDILAIVEA</sequence>
<organism>
    <name type="scientific">Serratia proteamaculans (strain 568)</name>
    <dbReference type="NCBI Taxonomy" id="399741"/>
    <lineage>
        <taxon>Bacteria</taxon>
        <taxon>Pseudomonadati</taxon>
        <taxon>Pseudomonadota</taxon>
        <taxon>Gammaproteobacteria</taxon>
        <taxon>Enterobacterales</taxon>
        <taxon>Yersiniaceae</taxon>
        <taxon>Serratia</taxon>
    </lineage>
</organism>
<dbReference type="EMBL" id="CP000826">
    <property type="protein sequence ID" value="ABV39516.1"/>
    <property type="molecule type" value="Genomic_DNA"/>
</dbReference>
<dbReference type="SMR" id="A8G8S6"/>
<dbReference type="STRING" id="399741.Spro_0408"/>
<dbReference type="KEGG" id="spe:Spro_0408"/>
<dbReference type="eggNOG" id="COG0234">
    <property type="taxonomic scope" value="Bacteria"/>
</dbReference>
<dbReference type="HOGENOM" id="CLU_132825_1_1_6"/>
<dbReference type="OrthoDB" id="9806791at2"/>
<dbReference type="GO" id="GO:0005737">
    <property type="term" value="C:cytoplasm"/>
    <property type="evidence" value="ECO:0007669"/>
    <property type="project" value="UniProtKB-SubCell"/>
</dbReference>
<dbReference type="GO" id="GO:0005524">
    <property type="term" value="F:ATP binding"/>
    <property type="evidence" value="ECO:0007669"/>
    <property type="project" value="InterPro"/>
</dbReference>
<dbReference type="GO" id="GO:0046872">
    <property type="term" value="F:metal ion binding"/>
    <property type="evidence" value="ECO:0007669"/>
    <property type="project" value="TreeGrafter"/>
</dbReference>
<dbReference type="GO" id="GO:0044183">
    <property type="term" value="F:protein folding chaperone"/>
    <property type="evidence" value="ECO:0007669"/>
    <property type="project" value="InterPro"/>
</dbReference>
<dbReference type="GO" id="GO:0051087">
    <property type="term" value="F:protein-folding chaperone binding"/>
    <property type="evidence" value="ECO:0007669"/>
    <property type="project" value="TreeGrafter"/>
</dbReference>
<dbReference type="GO" id="GO:0051082">
    <property type="term" value="F:unfolded protein binding"/>
    <property type="evidence" value="ECO:0007669"/>
    <property type="project" value="TreeGrafter"/>
</dbReference>
<dbReference type="GO" id="GO:0051085">
    <property type="term" value="P:chaperone cofactor-dependent protein refolding"/>
    <property type="evidence" value="ECO:0007669"/>
    <property type="project" value="TreeGrafter"/>
</dbReference>
<dbReference type="CDD" id="cd00320">
    <property type="entry name" value="cpn10"/>
    <property type="match status" value="1"/>
</dbReference>
<dbReference type="FunFam" id="2.30.33.40:FF:000001">
    <property type="entry name" value="10 kDa chaperonin"/>
    <property type="match status" value="1"/>
</dbReference>
<dbReference type="Gene3D" id="2.30.33.40">
    <property type="entry name" value="GroES chaperonin"/>
    <property type="match status" value="1"/>
</dbReference>
<dbReference type="HAMAP" id="MF_00580">
    <property type="entry name" value="CH10"/>
    <property type="match status" value="1"/>
</dbReference>
<dbReference type="InterPro" id="IPR020818">
    <property type="entry name" value="Chaperonin_GroES"/>
</dbReference>
<dbReference type="InterPro" id="IPR037124">
    <property type="entry name" value="Chaperonin_GroES_sf"/>
</dbReference>
<dbReference type="InterPro" id="IPR018369">
    <property type="entry name" value="Chaprnonin_Cpn10_CS"/>
</dbReference>
<dbReference type="InterPro" id="IPR011032">
    <property type="entry name" value="GroES-like_sf"/>
</dbReference>
<dbReference type="NCBIfam" id="NF001526">
    <property type="entry name" value="PRK00364.1-1"/>
    <property type="match status" value="1"/>
</dbReference>
<dbReference type="NCBIfam" id="NF001527">
    <property type="entry name" value="PRK00364.1-2"/>
    <property type="match status" value="1"/>
</dbReference>
<dbReference type="NCBIfam" id="NF001531">
    <property type="entry name" value="PRK00364.2-2"/>
    <property type="match status" value="1"/>
</dbReference>
<dbReference type="PANTHER" id="PTHR10772">
    <property type="entry name" value="10 KDA HEAT SHOCK PROTEIN"/>
    <property type="match status" value="1"/>
</dbReference>
<dbReference type="PANTHER" id="PTHR10772:SF58">
    <property type="entry name" value="CO-CHAPERONIN GROES"/>
    <property type="match status" value="1"/>
</dbReference>
<dbReference type="Pfam" id="PF00166">
    <property type="entry name" value="Cpn10"/>
    <property type="match status" value="1"/>
</dbReference>
<dbReference type="PRINTS" id="PR00297">
    <property type="entry name" value="CHAPERONIN10"/>
</dbReference>
<dbReference type="SMART" id="SM00883">
    <property type="entry name" value="Cpn10"/>
    <property type="match status" value="1"/>
</dbReference>
<dbReference type="SUPFAM" id="SSF50129">
    <property type="entry name" value="GroES-like"/>
    <property type="match status" value="1"/>
</dbReference>
<dbReference type="PROSITE" id="PS00681">
    <property type="entry name" value="CHAPERONINS_CPN10"/>
    <property type="match status" value="1"/>
</dbReference>